<comment type="function">
    <text evidence="2">Component of the ubiquinol-cytochrome c reductase complex (complex III or cytochrome b-c1 complex) that is part of the mitochondrial respiratory chain. The b-c1 complex mediates electron transfer from ubiquinol to cytochrome c. Contributes to the generation of a proton gradient across the mitochondrial membrane that is then used for ATP synthesis.</text>
</comment>
<comment type="cofactor">
    <cofactor evidence="2">
        <name>heme b</name>
        <dbReference type="ChEBI" id="CHEBI:60344"/>
    </cofactor>
    <text evidence="2">Binds 2 heme b groups non-covalently.</text>
</comment>
<comment type="subunit">
    <text evidence="2">The cytochrome bc1 complex contains 11 subunits: 3 respiratory subunits (MT-CYB, CYC1 and UQCRFS1), 2 core proteins (UQCRC1 and UQCRC2) and 6 low-molecular weight proteins (UQCRH/QCR6, UQCRB/QCR7, UQCRQ/QCR8, UQCR10/QCR9, UQCR11/QCR10 and a cleavage product of UQCRFS1). This cytochrome bc1 complex then forms a dimer.</text>
</comment>
<comment type="subcellular location">
    <subcellularLocation>
        <location evidence="2">Mitochondrion inner membrane</location>
        <topology evidence="2">Multi-pass membrane protein</topology>
    </subcellularLocation>
</comment>
<comment type="miscellaneous">
    <text evidence="1">Heme 1 (or BL or b562) is low-potential and absorbs at about 562 nm, and heme 2 (or BH or b566) is high-potential and absorbs at about 566 nm.</text>
</comment>
<comment type="similarity">
    <text evidence="3 4">Belongs to the cytochrome b family.</text>
</comment>
<comment type="caution">
    <text evidence="2">The full-length protein contains only eight transmembrane helices, not nine as predicted by bioinformatics tools.</text>
</comment>
<protein>
    <recommendedName>
        <fullName>Cytochrome b</fullName>
    </recommendedName>
    <alternativeName>
        <fullName>Complex III subunit 3</fullName>
    </alternativeName>
    <alternativeName>
        <fullName>Complex III subunit III</fullName>
    </alternativeName>
    <alternativeName>
        <fullName>Cytochrome b-c1 complex subunit 3</fullName>
    </alternativeName>
    <alternativeName>
        <fullName>Ubiquinol-cytochrome-c reductase complex cytochrome b subunit</fullName>
    </alternativeName>
</protein>
<name>CYB_CYNGU</name>
<evidence type="ECO:0000250" key="1"/>
<evidence type="ECO:0000250" key="2">
    <source>
        <dbReference type="UniProtKB" id="P00157"/>
    </source>
</evidence>
<evidence type="ECO:0000255" key="3">
    <source>
        <dbReference type="PROSITE-ProRule" id="PRU00967"/>
    </source>
</evidence>
<evidence type="ECO:0000255" key="4">
    <source>
        <dbReference type="PROSITE-ProRule" id="PRU00968"/>
    </source>
</evidence>
<feature type="chain" id="PRO_0000060848" description="Cytochrome b">
    <location>
        <begin position="1"/>
        <end position="379"/>
    </location>
</feature>
<feature type="transmembrane region" description="Helical" evidence="2">
    <location>
        <begin position="33"/>
        <end position="53"/>
    </location>
</feature>
<feature type="transmembrane region" description="Helical" evidence="2">
    <location>
        <begin position="77"/>
        <end position="98"/>
    </location>
</feature>
<feature type="transmembrane region" description="Helical" evidence="2">
    <location>
        <begin position="113"/>
        <end position="133"/>
    </location>
</feature>
<feature type="transmembrane region" description="Helical" evidence="2">
    <location>
        <begin position="178"/>
        <end position="198"/>
    </location>
</feature>
<feature type="transmembrane region" description="Helical" evidence="2">
    <location>
        <begin position="226"/>
        <end position="246"/>
    </location>
</feature>
<feature type="transmembrane region" description="Helical" evidence="2">
    <location>
        <begin position="288"/>
        <end position="308"/>
    </location>
</feature>
<feature type="transmembrane region" description="Helical" evidence="2">
    <location>
        <begin position="320"/>
        <end position="340"/>
    </location>
</feature>
<feature type="transmembrane region" description="Helical" evidence="2">
    <location>
        <begin position="347"/>
        <end position="367"/>
    </location>
</feature>
<feature type="binding site" description="axial binding residue" evidence="2">
    <location>
        <position position="83"/>
    </location>
    <ligand>
        <name>heme b</name>
        <dbReference type="ChEBI" id="CHEBI:60344"/>
        <label>b562</label>
    </ligand>
    <ligandPart>
        <name>Fe</name>
        <dbReference type="ChEBI" id="CHEBI:18248"/>
    </ligandPart>
</feature>
<feature type="binding site" description="axial binding residue" evidence="2">
    <location>
        <position position="97"/>
    </location>
    <ligand>
        <name>heme b</name>
        <dbReference type="ChEBI" id="CHEBI:60344"/>
        <label>b566</label>
    </ligand>
    <ligandPart>
        <name>Fe</name>
        <dbReference type="ChEBI" id="CHEBI:18248"/>
    </ligandPart>
</feature>
<feature type="binding site" description="axial binding residue" evidence="2">
    <location>
        <position position="182"/>
    </location>
    <ligand>
        <name>heme b</name>
        <dbReference type="ChEBI" id="CHEBI:60344"/>
        <label>b562</label>
    </ligand>
    <ligandPart>
        <name>Fe</name>
        <dbReference type="ChEBI" id="CHEBI:18248"/>
    </ligandPart>
</feature>
<feature type="binding site" description="axial binding residue" evidence="2">
    <location>
        <position position="196"/>
    </location>
    <ligand>
        <name>heme b</name>
        <dbReference type="ChEBI" id="CHEBI:60344"/>
        <label>b566</label>
    </ligand>
    <ligandPart>
        <name>Fe</name>
        <dbReference type="ChEBI" id="CHEBI:18248"/>
    </ligandPart>
</feature>
<feature type="binding site" evidence="2">
    <location>
        <position position="201"/>
    </location>
    <ligand>
        <name>a ubiquinone</name>
        <dbReference type="ChEBI" id="CHEBI:16389"/>
    </ligand>
</feature>
<geneLocation type="mitochondrion"/>
<gene>
    <name type="primary">MT-CYB</name>
    <name type="synonym">COB</name>
    <name type="synonym">CYTB</name>
    <name type="synonym">MTCYB</name>
</gene>
<keyword id="KW-0249">Electron transport</keyword>
<keyword id="KW-0349">Heme</keyword>
<keyword id="KW-0408">Iron</keyword>
<keyword id="KW-0472">Membrane</keyword>
<keyword id="KW-0479">Metal-binding</keyword>
<keyword id="KW-0496">Mitochondrion</keyword>
<keyword id="KW-0999">Mitochondrion inner membrane</keyword>
<keyword id="KW-0679">Respiratory chain</keyword>
<keyword id="KW-0812">Transmembrane</keyword>
<keyword id="KW-1133">Transmembrane helix</keyword>
<keyword id="KW-0813">Transport</keyword>
<keyword id="KW-0830">Ubiquinone</keyword>
<dbReference type="EMBL" id="AF157930">
    <property type="protein sequence ID" value="AAD50214.1"/>
    <property type="molecule type" value="Genomic_DNA"/>
</dbReference>
<dbReference type="SMR" id="Q9TF27"/>
<dbReference type="GO" id="GO:0005743">
    <property type="term" value="C:mitochondrial inner membrane"/>
    <property type="evidence" value="ECO:0007669"/>
    <property type="project" value="UniProtKB-SubCell"/>
</dbReference>
<dbReference type="GO" id="GO:0045275">
    <property type="term" value="C:respiratory chain complex III"/>
    <property type="evidence" value="ECO:0007669"/>
    <property type="project" value="InterPro"/>
</dbReference>
<dbReference type="GO" id="GO:0046872">
    <property type="term" value="F:metal ion binding"/>
    <property type="evidence" value="ECO:0007669"/>
    <property type="project" value="UniProtKB-KW"/>
</dbReference>
<dbReference type="GO" id="GO:0008121">
    <property type="term" value="F:ubiquinol-cytochrome-c reductase activity"/>
    <property type="evidence" value="ECO:0007669"/>
    <property type="project" value="InterPro"/>
</dbReference>
<dbReference type="GO" id="GO:0006122">
    <property type="term" value="P:mitochondrial electron transport, ubiquinol to cytochrome c"/>
    <property type="evidence" value="ECO:0007669"/>
    <property type="project" value="TreeGrafter"/>
</dbReference>
<dbReference type="CDD" id="cd00290">
    <property type="entry name" value="cytochrome_b_C"/>
    <property type="match status" value="1"/>
</dbReference>
<dbReference type="CDD" id="cd00284">
    <property type="entry name" value="Cytochrome_b_N"/>
    <property type="match status" value="1"/>
</dbReference>
<dbReference type="FunFam" id="1.20.810.10:FF:000002">
    <property type="entry name" value="Cytochrome b"/>
    <property type="match status" value="1"/>
</dbReference>
<dbReference type="Gene3D" id="1.20.810.10">
    <property type="entry name" value="Cytochrome Bc1 Complex, Chain C"/>
    <property type="match status" value="1"/>
</dbReference>
<dbReference type="InterPro" id="IPR005798">
    <property type="entry name" value="Cyt_b/b6_C"/>
</dbReference>
<dbReference type="InterPro" id="IPR036150">
    <property type="entry name" value="Cyt_b/b6_C_sf"/>
</dbReference>
<dbReference type="InterPro" id="IPR005797">
    <property type="entry name" value="Cyt_b/b6_N"/>
</dbReference>
<dbReference type="InterPro" id="IPR027387">
    <property type="entry name" value="Cytb/b6-like_sf"/>
</dbReference>
<dbReference type="InterPro" id="IPR030689">
    <property type="entry name" value="Cytochrome_b"/>
</dbReference>
<dbReference type="InterPro" id="IPR048260">
    <property type="entry name" value="Cytochrome_b_C_euk/bac"/>
</dbReference>
<dbReference type="InterPro" id="IPR048259">
    <property type="entry name" value="Cytochrome_b_N_euk/bac"/>
</dbReference>
<dbReference type="InterPro" id="IPR016174">
    <property type="entry name" value="Di-haem_cyt_TM"/>
</dbReference>
<dbReference type="PANTHER" id="PTHR19271">
    <property type="entry name" value="CYTOCHROME B"/>
    <property type="match status" value="1"/>
</dbReference>
<dbReference type="PANTHER" id="PTHR19271:SF16">
    <property type="entry name" value="CYTOCHROME B"/>
    <property type="match status" value="1"/>
</dbReference>
<dbReference type="Pfam" id="PF00032">
    <property type="entry name" value="Cytochrom_B_C"/>
    <property type="match status" value="1"/>
</dbReference>
<dbReference type="Pfam" id="PF00033">
    <property type="entry name" value="Cytochrome_B"/>
    <property type="match status" value="1"/>
</dbReference>
<dbReference type="PIRSF" id="PIRSF038885">
    <property type="entry name" value="COB"/>
    <property type="match status" value="1"/>
</dbReference>
<dbReference type="SUPFAM" id="SSF81648">
    <property type="entry name" value="a domain/subunit of cytochrome bc1 complex (Ubiquinol-cytochrome c reductase)"/>
    <property type="match status" value="1"/>
</dbReference>
<dbReference type="SUPFAM" id="SSF81342">
    <property type="entry name" value="Transmembrane di-heme cytochromes"/>
    <property type="match status" value="1"/>
</dbReference>
<dbReference type="PROSITE" id="PS51003">
    <property type="entry name" value="CYTB_CTER"/>
    <property type="match status" value="1"/>
</dbReference>
<dbReference type="PROSITE" id="PS51002">
    <property type="entry name" value="CYTB_NTER"/>
    <property type="match status" value="1"/>
</dbReference>
<sequence>MTNTRKTHPLIKIINHSFIDLPAPSNISAWWNFGSLLGLCLAIQILTGLFLAMHYTSDTMTAFSSVTHICRDVNYGWLIRYMHANGASMFFICLFLHVGRGLYYGSYTYFETWNIGVILLFVVMATAFMGYVLPWGQMSFWGATVITNLLSAIPYIGTTLVEWIWGGFSVDKATLTRFFAFHFVLPFIIAALVMVHLLFLHETGSNNPSGLISDSDKIPFHPYYTIKDILGVLLLILALMILVLFSPDLLGDPDNYTPANPLSTPPHIKPEWYFLFAYAILRSIPNKLGGVLALVFSILILTLFPLLHVSKQRSMMFRPLSQCMFWFLVADLLTLTWIGGQPVEYPFITIGQLASILYFTIILLMLPIVSLFENKLLKW</sequence>
<accession>Q9TF27</accession>
<reference key="1">
    <citation type="submission" date="1999-06" db="EMBL/GenBank/DDBJ databases">
        <title>A molecular phylogeny of ground squirrels and prairie dogs.</title>
        <authorList>
            <person name="Harrison R.G."/>
            <person name="Sherman P.W."/>
            <person name="Yensen E."/>
            <person name="Hoffmann R.S."/>
            <person name="Bogdanowicz S.M."/>
        </authorList>
    </citation>
    <scope>NUCLEOTIDE SEQUENCE [GENOMIC DNA]</scope>
    <source>
        <strain>Isolate S82</strain>
    </source>
</reference>
<organism>
    <name type="scientific">Cynomys gunnisoni</name>
    <name type="common">Gunnison's prairie dog</name>
    <name type="synonym">Spermophilus gunnisoni</name>
    <dbReference type="NCBI Taxonomy" id="45479"/>
    <lineage>
        <taxon>Eukaryota</taxon>
        <taxon>Metazoa</taxon>
        <taxon>Chordata</taxon>
        <taxon>Craniata</taxon>
        <taxon>Vertebrata</taxon>
        <taxon>Euteleostomi</taxon>
        <taxon>Mammalia</taxon>
        <taxon>Eutheria</taxon>
        <taxon>Euarchontoglires</taxon>
        <taxon>Glires</taxon>
        <taxon>Rodentia</taxon>
        <taxon>Sciuromorpha</taxon>
        <taxon>Sciuridae</taxon>
        <taxon>Xerinae</taxon>
        <taxon>Marmotini</taxon>
        <taxon>Cynomys</taxon>
    </lineage>
</organism>
<proteinExistence type="inferred from homology"/>